<feature type="chain" id="PRO_0000399061" description="Increased recombination centers protein 19">
    <location>
        <begin position="1"/>
        <end position="204"/>
    </location>
</feature>
<gene>
    <name type="primary">IRC19</name>
    <name type="synonym">RRG4</name>
    <name type="ordered locus">PAS_chr1-3_0277</name>
</gene>
<name>IRC19_KOMPG</name>
<comment type="function">
    <text evidence="1">Involved in sporulation and maintenance of the mitochondrial DNA. Is probably involved in a pathway contributing to genomic integrity (By similarity).</text>
</comment>
<comment type="similarity">
    <text evidence="2">Belongs to the IRC19 family.</text>
</comment>
<sequence>MSNGPAKYTIINRLVQPILPIKKQLLEENPNHSLRLLSLYRRHLRLRPFISPRADIKQFYTDLVRLRFKEDIELRRKHFTTPYTPLDKDSIIERVIRTLEIVNNGCVDSPNSIERQIIRNILDVEYANKNIKMVPLMSVEYFKEELWKGRELDVVSEPKLYDWVNKIDISNKSKKKNEQLNLLTALRNHYRSVASFNEVQKTLL</sequence>
<evidence type="ECO:0000250" key="1"/>
<evidence type="ECO:0000305" key="2"/>
<dbReference type="EMBL" id="FN392319">
    <property type="protein sequence ID" value="CAY67342.1"/>
    <property type="molecule type" value="Genomic_DNA"/>
</dbReference>
<dbReference type="RefSeq" id="XP_002489623.1">
    <property type="nucleotide sequence ID" value="XM_002489578.1"/>
</dbReference>
<dbReference type="SMR" id="C4QVR9"/>
<dbReference type="FunCoup" id="C4QVR9">
    <property type="interactions" value="13"/>
</dbReference>
<dbReference type="EnsemblFungi" id="CAY67342">
    <property type="protein sequence ID" value="CAY67342"/>
    <property type="gene ID" value="PAS_chr1-3_0277"/>
</dbReference>
<dbReference type="GeneID" id="8196809"/>
<dbReference type="KEGG" id="ppa:PAS_chr1-3_0277"/>
<dbReference type="HOGENOM" id="CLU_1343707_0_0_1"/>
<dbReference type="InParanoid" id="C4QVR9"/>
<dbReference type="OrthoDB" id="3991133at2759"/>
<dbReference type="Proteomes" id="UP000000314">
    <property type="component" value="Chromosome 1"/>
</dbReference>
<dbReference type="GO" id="GO:0030435">
    <property type="term" value="P:sporulation resulting in formation of a cellular spore"/>
    <property type="evidence" value="ECO:0007669"/>
    <property type="project" value="UniProtKB-KW"/>
</dbReference>
<accession>C4QVR9</accession>
<organism>
    <name type="scientific">Komagataella phaffii (strain GS115 / ATCC 20864)</name>
    <name type="common">Yeast</name>
    <name type="synonym">Pichia pastoris</name>
    <dbReference type="NCBI Taxonomy" id="644223"/>
    <lineage>
        <taxon>Eukaryota</taxon>
        <taxon>Fungi</taxon>
        <taxon>Dikarya</taxon>
        <taxon>Ascomycota</taxon>
        <taxon>Saccharomycotina</taxon>
        <taxon>Pichiomycetes</taxon>
        <taxon>Pichiales</taxon>
        <taxon>Pichiaceae</taxon>
        <taxon>Komagataella</taxon>
    </lineage>
</organism>
<keyword id="KW-1185">Reference proteome</keyword>
<keyword id="KW-0749">Sporulation</keyword>
<reference key="1">
    <citation type="journal article" date="2009" name="Nat. Biotechnol.">
        <title>Genome sequence of the recombinant protein production host Pichia pastoris.</title>
        <authorList>
            <person name="De Schutter K."/>
            <person name="Lin Y.-C."/>
            <person name="Tiels P."/>
            <person name="Van Hecke A."/>
            <person name="Glinka S."/>
            <person name="Weber-Lehmann J."/>
            <person name="Rouze P."/>
            <person name="Van de Peer Y."/>
            <person name="Callewaert N."/>
        </authorList>
    </citation>
    <scope>NUCLEOTIDE SEQUENCE [LARGE SCALE GENOMIC DNA]</scope>
    <source>
        <strain>GS115 / ATCC 20864</strain>
    </source>
</reference>
<proteinExistence type="inferred from homology"/>
<protein>
    <recommendedName>
        <fullName>Increased recombination centers protein 19</fullName>
    </recommendedName>
</protein>